<sequence length="359" mass="40850">MISKDPRSSLPPGFRFHPTDEELILHYLRKKVSSSPVPLSIIADVDIYKSDPWDLPAKAPFGEKEWYFFSPRDRKYPNGARPNRAAASGYWKATGTDKLIAVPNGEGFHENIGIKKALVFYRGKPPKGVKTNWIMHEYRLADSLSPKRINSSRSGGSEVNNNFGDRNSKEYSMRLDDWVLCRIYKKSHASLSSPDVALVTSNQEHEENDNEPFVDRGTFLPNLQNDQPLKRQKSSCSFSNLLDATDLTFLANFLNETPENRSESDFSFMIGNFSNPDIYGNHYLDQKLPQLSSPTSETSGIGSKRERVDFAEETINASKKMMNTYSYNNSIDQMDHSMMQQPSFLNQELMMSSHLQYQG</sequence>
<proteinExistence type="evidence at transcript level"/>
<gene>
    <name evidence="7" type="primary">NAC047</name>
    <name evidence="7" type="synonym">NAC47</name>
    <name evidence="6" type="synonym">SHYG</name>
    <name evidence="9" type="ordered locus">At3g04070</name>
</gene>
<organism>
    <name type="scientific">Arabidopsis thaliana</name>
    <name type="common">Mouse-ear cress</name>
    <dbReference type="NCBI Taxonomy" id="3702"/>
    <lineage>
        <taxon>Eukaryota</taxon>
        <taxon>Viridiplantae</taxon>
        <taxon>Streptophyta</taxon>
        <taxon>Embryophyta</taxon>
        <taxon>Tracheophyta</taxon>
        <taxon>Spermatophyta</taxon>
        <taxon>Magnoliopsida</taxon>
        <taxon>eudicotyledons</taxon>
        <taxon>Gunneridae</taxon>
        <taxon>Pentapetalae</taxon>
        <taxon>rosids</taxon>
        <taxon>malvids</taxon>
        <taxon>Brassicales</taxon>
        <taxon>Brassicaceae</taxon>
        <taxon>Camelineae</taxon>
        <taxon>Arabidopsis</taxon>
    </lineage>
</organism>
<keyword id="KW-0025">Alternative splicing</keyword>
<keyword id="KW-0238">DNA-binding</keyword>
<keyword id="KW-0539">Nucleus</keyword>
<keyword id="KW-1185">Reference proteome</keyword>
<keyword id="KW-0804">Transcription</keyword>
<keyword id="KW-0805">Transcription regulation</keyword>
<name>NAC47_ARATH</name>
<accession>Q84TD6</accession>
<dbReference type="EMBL" id="AC011698">
    <property type="status" value="NOT_ANNOTATED_CDS"/>
    <property type="molecule type" value="Genomic_DNA"/>
</dbReference>
<dbReference type="EMBL" id="CP002686">
    <property type="protein sequence ID" value="AEE74033.1"/>
    <property type="molecule type" value="Genomic_DNA"/>
</dbReference>
<dbReference type="EMBL" id="BT005985">
    <property type="protein sequence ID" value="AAO64920.1"/>
    <property type="molecule type" value="mRNA"/>
</dbReference>
<dbReference type="EMBL" id="AK227417">
    <property type="protein sequence ID" value="BAE99421.1"/>
    <property type="molecule type" value="mRNA"/>
</dbReference>
<dbReference type="RefSeq" id="NP_187057.2">
    <molecule id="Q84TD6-1"/>
    <property type="nucleotide sequence ID" value="NM_111278.4"/>
</dbReference>
<dbReference type="SMR" id="Q84TD6"/>
<dbReference type="FunCoup" id="Q84TD6">
    <property type="interactions" value="34"/>
</dbReference>
<dbReference type="IntAct" id="Q84TD6">
    <property type="interactions" value="4"/>
</dbReference>
<dbReference type="STRING" id="3702.Q84TD6"/>
<dbReference type="PaxDb" id="3702-AT3G04070.1"/>
<dbReference type="ProteomicsDB" id="251341">
    <molecule id="Q84TD6-1"/>
</dbReference>
<dbReference type="DNASU" id="819562"/>
<dbReference type="EnsemblPlants" id="AT3G04070.1">
    <molecule id="Q84TD6-1"/>
    <property type="protein sequence ID" value="AT3G04070.1"/>
    <property type="gene ID" value="AT3G04070"/>
</dbReference>
<dbReference type="GeneID" id="819562"/>
<dbReference type="Gramene" id="AT3G04070.1">
    <molecule id="Q84TD6-1"/>
    <property type="protein sequence ID" value="AT3G04070.1"/>
    <property type="gene ID" value="AT3G04070"/>
</dbReference>
<dbReference type="KEGG" id="ath:AT3G04070"/>
<dbReference type="Araport" id="AT3G04070"/>
<dbReference type="TAIR" id="AT3G04070">
    <property type="gene designation" value="NAC047"/>
</dbReference>
<dbReference type="eggNOG" id="ENOG502QSIY">
    <property type="taxonomic scope" value="Eukaryota"/>
</dbReference>
<dbReference type="InParanoid" id="Q84TD6"/>
<dbReference type="PhylomeDB" id="Q84TD6"/>
<dbReference type="PRO" id="PR:Q84TD6"/>
<dbReference type="Proteomes" id="UP000006548">
    <property type="component" value="Chromosome 3"/>
</dbReference>
<dbReference type="ExpressionAtlas" id="Q84TD6">
    <property type="expression patterns" value="baseline and differential"/>
</dbReference>
<dbReference type="GO" id="GO:0005634">
    <property type="term" value="C:nucleus"/>
    <property type="evidence" value="ECO:0000314"/>
    <property type="project" value="UniProtKB"/>
</dbReference>
<dbReference type="GO" id="GO:0003700">
    <property type="term" value="F:DNA-binding transcription factor activity"/>
    <property type="evidence" value="ECO:0000250"/>
    <property type="project" value="TAIR"/>
</dbReference>
<dbReference type="GO" id="GO:0000976">
    <property type="term" value="F:transcription cis-regulatory region binding"/>
    <property type="evidence" value="ECO:0000353"/>
    <property type="project" value="TAIR"/>
</dbReference>
<dbReference type="GO" id="GO:0009793">
    <property type="term" value="P:embryo development ending in seed dormancy"/>
    <property type="evidence" value="ECO:0000315"/>
    <property type="project" value="UniProtKB"/>
</dbReference>
<dbReference type="GO" id="GO:0010365">
    <property type="term" value="P:positive regulation of ethylene biosynthetic process"/>
    <property type="evidence" value="ECO:0000314"/>
    <property type="project" value="UniProtKB"/>
</dbReference>
<dbReference type="GO" id="GO:0009413">
    <property type="term" value="P:response to flooding"/>
    <property type="evidence" value="ECO:0000315"/>
    <property type="project" value="UniProtKB"/>
</dbReference>
<dbReference type="FunFam" id="2.170.150.80:FF:000005">
    <property type="entry name" value="NAC transcription factor 56"/>
    <property type="match status" value="1"/>
</dbReference>
<dbReference type="Gene3D" id="2.170.150.80">
    <property type="entry name" value="NAC domain"/>
    <property type="match status" value="1"/>
</dbReference>
<dbReference type="InterPro" id="IPR003441">
    <property type="entry name" value="NAC-dom"/>
</dbReference>
<dbReference type="InterPro" id="IPR036093">
    <property type="entry name" value="NAC_dom_sf"/>
</dbReference>
<dbReference type="PANTHER" id="PTHR31719:SF201">
    <property type="entry name" value="NAC TRANSCRIPTION FACTOR 47"/>
    <property type="match status" value="1"/>
</dbReference>
<dbReference type="PANTHER" id="PTHR31719">
    <property type="entry name" value="NAC TRANSCRIPTION FACTOR 56"/>
    <property type="match status" value="1"/>
</dbReference>
<dbReference type="Pfam" id="PF02365">
    <property type="entry name" value="NAM"/>
    <property type="match status" value="1"/>
</dbReference>
<dbReference type="SUPFAM" id="SSF101941">
    <property type="entry name" value="NAC domain"/>
    <property type="match status" value="1"/>
</dbReference>
<dbReference type="PROSITE" id="PS51005">
    <property type="entry name" value="NAC"/>
    <property type="match status" value="1"/>
</dbReference>
<protein>
    <recommendedName>
        <fullName evidence="7">NAC transcription factor 47</fullName>
    </recommendedName>
    <alternativeName>
        <fullName evidence="7">NAC domain-containing protein 47</fullName>
        <shortName evidence="7">ANAC047</shortName>
    </alternativeName>
    <alternativeName>
        <fullName evidence="6">Protein SPEEDY HYPONASTIC GROWTH</fullName>
    </alternativeName>
</protein>
<comment type="function">
    <text evidence="3 4">Transcription factor that binds to the promoter of ACO5, an ACC oxidase involved in ethylene biosynthesis. Mediates waterlogging-induced hyponastic leaf movement, and cell expansion in abaxial cells of the basal petiole region, by directly regulating the expression of ACO5 (PubMed:24363315). Required for normal seed development and morphology (PubMed:18849494).</text>
</comment>
<comment type="subcellular location">
    <subcellularLocation>
        <location evidence="1 4">Nucleus</location>
    </subcellularLocation>
</comment>
<comment type="alternative products">
    <event type="alternative splicing"/>
    <isoform>
        <id>Q84TD6-1</id>
        <name>1</name>
        <sequence type="displayed"/>
    </isoform>
    <text evidence="7">A number of isoforms are produced. According to EST sequences.</text>
</comment>
<comment type="induction">
    <text evidence="4 5">By root flooding (PubMed:24363315). Induced by senescence (PubMed:24659488).</text>
</comment>
<comment type="miscellaneous">
    <text evidence="3 8">In rosette plants, root flooding (waterlogging) triggers rapid upward (hyponastic) leaf movement representing an important architectural stress response that critically determines plant performance in natural habitats (Probable). Plants silencing NAC047 produce abnormally shaped seeds (PubMed:18849494).</text>
</comment>
<feature type="chain" id="PRO_0000437980" description="NAC transcription factor 47">
    <location>
        <begin position="1"/>
        <end position="359"/>
    </location>
</feature>
<feature type="domain" description="NAC" evidence="1">
    <location>
        <begin position="10"/>
        <end position="186"/>
    </location>
</feature>
<feature type="DNA-binding region" evidence="1">
    <location>
        <begin position="112"/>
        <end position="192"/>
    </location>
</feature>
<feature type="region of interest" description="Disordered" evidence="2">
    <location>
        <begin position="147"/>
        <end position="166"/>
    </location>
</feature>
<feature type="region of interest" description="Disordered" evidence="2">
    <location>
        <begin position="200"/>
        <end position="226"/>
    </location>
</feature>
<feature type="compositionally biased region" description="Polar residues" evidence="2">
    <location>
        <begin position="148"/>
        <end position="165"/>
    </location>
</feature>
<reference key="1">
    <citation type="journal article" date="2000" name="Nature">
        <title>Sequence and analysis of chromosome 3 of the plant Arabidopsis thaliana.</title>
        <authorList>
            <person name="Salanoubat M."/>
            <person name="Lemcke K."/>
            <person name="Rieger M."/>
            <person name="Ansorge W."/>
            <person name="Unseld M."/>
            <person name="Fartmann B."/>
            <person name="Valle G."/>
            <person name="Bloecker H."/>
            <person name="Perez-Alonso M."/>
            <person name="Obermaier B."/>
            <person name="Delseny M."/>
            <person name="Boutry M."/>
            <person name="Grivell L.A."/>
            <person name="Mache R."/>
            <person name="Puigdomenech P."/>
            <person name="De Simone V."/>
            <person name="Choisne N."/>
            <person name="Artiguenave F."/>
            <person name="Robert C."/>
            <person name="Brottier P."/>
            <person name="Wincker P."/>
            <person name="Cattolico L."/>
            <person name="Weissenbach J."/>
            <person name="Saurin W."/>
            <person name="Quetier F."/>
            <person name="Schaefer M."/>
            <person name="Mueller-Auer S."/>
            <person name="Gabel C."/>
            <person name="Fuchs M."/>
            <person name="Benes V."/>
            <person name="Wurmbach E."/>
            <person name="Drzonek H."/>
            <person name="Erfle H."/>
            <person name="Jordan N."/>
            <person name="Bangert S."/>
            <person name="Wiedelmann R."/>
            <person name="Kranz H."/>
            <person name="Voss H."/>
            <person name="Holland R."/>
            <person name="Brandt P."/>
            <person name="Nyakatura G."/>
            <person name="Vezzi A."/>
            <person name="D'Angelo M."/>
            <person name="Pallavicini A."/>
            <person name="Toppo S."/>
            <person name="Simionati B."/>
            <person name="Conrad A."/>
            <person name="Hornischer K."/>
            <person name="Kauer G."/>
            <person name="Loehnert T.-H."/>
            <person name="Nordsiek G."/>
            <person name="Reichelt J."/>
            <person name="Scharfe M."/>
            <person name="Schoen O."/>
            <person name="Bargues M."/>
            <person name="Terol J."/>
            <person name="Climent J."/>
            <person name="Navarro P."/>
            <person name="Collado C."/>
            <person name="Perez-Perez A."/>
            <person name="Ottenwaelder B."/>
            <person name="Duchemin D."/>
            <person name="Cooke R."/>
            <person name="Laudie M."/>
            <person name="Berger-Llauro C."/>
            <person name="Purnelle B."/>
            <person name="Masuy D."/>
            <person name="de Haan M."/>
            <person name="Maarse A.C."/>
            <person name="Alcaraz J.-P."/>
            <person name="Cottet A."/>
            <person name="Casacuberta E."/>
            <person name="Monfort A."/>
            <person name="Argiriou A."/>
            <person name="Flores M."/>
            <person name="Liguori R."/>
            <person name="Vitale D."/>
            <person name="Mannhaupt G."/>
            <person name="Haase D."/>
            <person name="Schoof H."/>
            <person name="Rudd S."/>
            <person name="Zaccaria P."/>
            <person name="Mewes H.-W."/>
            <person name="Mayer K.F.X."/>
            <person name="Kaul S."/>
            <person name="Town C.D."/>
            <person name="Koo H.L."/>
            <person name="Tallon L.J."/>
            <person name="Jenkins J."/>
            <person name="Rooney T."/>
            <person name="Rizzo M."/>
            <person name="Walts A."/>
            <person name="Utterback T."/>
            <person name="Fujii C.Y."/>
            <person name="Shea T.P."/>
            <person name="Creasy T.H."/>
            <person name="Haas B."/>
            <person name="Maiti R."/>
            <person name="Wu D."/>
            <person name="Peterson J."/>
            <person name="Van Aken S."/>
            <person name="Pai G."/>
            <person name="Militscher J."/>
            <person name="Sellers P."/>
            <person name="Gill J.E."/>
            <person name="Feldblyum T.V."/>
            <person name="Preuss D."/>
            <person name="Lin X."/>
            <person name="Nierman W.C."/>
            <person name="Salzberg S.L."/>
            <person name="White O."/>
            <person name="Venter J.C."/>
            <person name="Fraser C.M."/>
            <person name="Kaneko T."/>
            <person name="Nakamura Y."/>
            <person name="Sato S."/>
            <person name="Kato T."/>
            <person name="Asamizu E."/>
            <person name="Sasamoto S."/>
            <person name="Kimura T."/>
            <person name="Idesawa K."/>
            <person name="Kawashima K."/>
            <person name="Kishida Y."/>
            <person name="Kiyokawa C."/>
            <person name="Kohara M."/>
            <person name="Matsumoto M."/>
            <person name="Matsuno A."/>
            <person name="Muraki A."/>
            <person name="Nakayama S."/>
            <person name="Nakazaki N."/>
            <person name="Shinpo S."/>
            <person name="Takeuchi C."/>
            <person name="Wada T."/>
            <person name="Watanabe A."/>
            <person name="Yamada M."/>
            <person name="Yasuda M."/>
            <person name="Tabata S."/>
        </authorList>
    </citation>
    <scope>NUCLEOTIDE SEQUENCE [LARGE SCALE GENOMIC DNA]</scope>
    <source>
        <strain>cv. Columbia</strain>
    </source>
</reference>
<reference key="2">
    <citation type="journal article" date="2017" name="Plant J.">
        <title>Araport11: a complete reannotation of the Arabidopsis thaliana reference genome.</title>
        <authorList>
            <person name="Cheng C.Y."/>
            <person name="Krishnakumar V."/>
            <person name="Chan A.P."/>
            <person name="Thibaud-Nissen F."/>
            <person name="Schobel S."/>
            <person name="Town C.D."/>
        </authorList>
    </citation>
    <scope>GENOME REANNOTATION</scope>
    <source>
        <strain>cv. Columbia</strain>
    </source>
</reference>
<reference key="3">
    <citation type="journal article" date="2003" name="Science">
        <title>Empirical analysis of transcriptional activity in the Arabidopsis genome.</title>
        <authorList>
            <person name="Yamada K."/>
            <person name="Lim J."/>
            <person name="Dale J.M."/>
            <person name="Chen H."/>
            <person name="Shinn P."/>
            <person name="Palm C.J."/>
            <person name="Southwick A.M."/>
            <person name="Wu H.C."/>
            <person name="Kim C.J."/>
            <person name="Nguyen M."/>
            <person name="Pham P.K."/>
            <person name="Cheuk R.F."/>
            <person name="Karlin-Newmann G."/>
            <person name="Liu S.X."/>
            <person name="Lam B."/>
            <person name="Sakano H."/>
            <person name="Wu T."/>
            <person name="Yu G."/>
            <person name="Miranda M."/>
            <person name="Quach H.L."/>
            <person name="Tripp M."/>
            <person name="Chang C.H."/>
            <person name="Lee J.M."/>
            <person name="Toriumi M.J."/>
            <person name="Chan M.M."/>
            <person name="Tang C.C."/>
            <person name="Onodera C.S."/>
            <person name="Deng J.M."/>
            <person name="Akiyama K."/>
            <person name="Ansari Y."/>
            <person name="Arakawa T."/>
            <person name="Banh J."/>
            <person name="Banno F."/>
            <person name="Bowser L."/>
            <person name="Brooks S.Y."/>
            <person name="Carninci P."/>
            <person name="Chao Q."/>
            <person name="Choy N."/>
            <person name="Enju A."/>
            <person name="Goldsmith A.D."/>
            <person name="Gurjal M."/>
            <person name="Hansen N.F."/>
            <person name="Hayashizaki Y."/>
            <person name="Johnson-Hopson C."/>
            <person name="Hsuan V.W."/>
            <person name="Iida K."/>
            <person name="Karnes M."/>
            <person name="Khan S."/>
            <person name="Koesema E."/>
            <person name="Ishida J."/>
            <person name="Jiang P.X."/>
            <person name="Jones T."/>
            <person name="Kawai J."/>
            <person name="Kamiya A."/>
            <person name="Meyers C."/>
            <person name="Nakajima M."/>
            <person name="Narusaka M."/>
            <person name="Seki M."/>
            <person name="Sakurai T."/>
            <person name="Satou M."/>
            <person name="Tamse R."/>
            <person name="Vaysberg M."/>
            <person name="Wallender E.K."/>
            <person name="Wong C."/>
            <person name="Yamamura Y."/>
            <person name="Yuan S."/>
            <person name="Shinozaki K."/>
            <person name="Davis R.W."/>
            <person name="Theologis A."/>
            <person name="Ecker J.R."/>
        </authorList>
    </citation>
    <scope>NUCLEOTIDE SEQUENCE [LARGE SCALE MRNA]</scope>
    <source>
        <strain>cv. Columbia</strain>
    </source>
</reference>
<reference key="4">
    <citation type="submission" date="2006-07" db="EMBL/GenBank/DDBJ databases">
        <title>Large-scale analysis of RIKEN Arabidopsis full-length (RAFL) cDNAs.</title>
        <authorList>
            <person name="Totoki Y."/>
            <person name="Seki M."/>
            <person name="Ishida J."/>
            <person name="Nakajima M."/>
            <person name="Enju A."/>
            <person name="Kamiya A."/>
            <person name="Narusaka M."/>
            <person name="Shin-i T."/>
            <person name="Nakagawa M."/>
            <person name="Sakamoto N."/>
            <person name="Oishi K."/>
            <person name="Kohara Y."/>
            <person name="Kobayashi M."/>
            <person name="Toyoda A."/>
            <person name="Sakaki Y."/>
            <person name="Sakurai T."/>
            <person name="Iida K."/>
            <person name="Akiyama K."/>
            <person name="Satou M."/>
            <person name="Toyoda T."/>
            <person name="Konagaya A."/>
            <person name="Carninci P."/>
            <person name="Kawai J."/>
            <person name="Hayashizaki Y."/>
            <person name="Shinozaki K."/>
        </authorList>
    </citation>
    <scope>NUCLEOTIDE SEQUENCE [LARGE SCALE MRNA]</scope>
    <source>
        <strain>cv. Columbia</strain>
    </source>
</reference>
<reference key="5">
    <citation type="journal article" date="2008" name="Plant Cell">
        <title>NAC family proteins NARS1/NAC2 and NARS2/NAM in the outer integument regulate embryogenesis in Arabidopsis.</title>
        <authorList>
            <person name="Kunieda T."/>
            <person name="Mitsuda N."/>
            <person name="Ohme-Takagi M."/>
            <person name="Takeda S."/>
            <person name="Aida M."/>
            <person name="Tasaka M."/>
            <person name="Kondo M."/>
            <person name="Nishimura M."/>
            <person name="Hara-Nishimura I."/>
        </authorList>
    </citation>
    <scope>FUNCTION</scope>
</reference>
<reference key="6">
    <citation type="journal article" date="2013" name="Plant Cell">
        <title>NAC transcription factor speedy hyponastic growth regulates flooding-induced leaf movement in Arabidopsis.</title>
        <authorList>
            <person name="Rauf M."/>
            <person name="Arif M."/>
            <person name="Fisahn J."/>
            <person name="Xue G.P."/>
            <person name="Balazadeh S."/>
            <person name="Mueller-Roeber B."/>
        </authorList>
    </citation>
    <scope>FUNCTION</scope>
    <scope>SUBCELLULAR LOCATION</scope>
    <scope>INDUCTION BY ROOT FLOODING</scope>
</reference>
<reference key="7">
    <citation type="journal article" date="2014" name="J. Exp. Bot.">
        <title>Gene regulatory cascade of senescence-associated NAC transcription factors activated by ETHYLENE-INSENSITIVE2-mediated leaf senescence signalling in Arabidopsis.</title>
        <authorList>
            <person name="Kim H.J."/>
            <person name="Hong S.H."/>
            <person name="Kim Y.W."/>
            <person name="Lee I.H."/>
            <person name="Jun J.H."/>
            <person name="Phee B.K."/>
            <person name="Rupak T."/>
            <person name="Jeong H."/>
            <person name="Lee Y."/>
            <person name="Hong B.S."/>
            <person name="Nam H.G."/>
            <person name="Woo H.R."/>
            <person name="Lim P.O."/>
        </authorList>
    </citation>
    <scope>INDUCTION BY SENESCENCE</scope>
</reference>
<evidence type="ECO:0000255" key="1">
    <source>
        <dbReference type="PROSITE-ProRule" id="PRU00353"/>
    </source>
</evidence>
<evidence type="ECO:0000256" key="2">
    <source>
        <dbReference type="SAM" id="MobiDB-lite"/>
    </source>
</evidence>
<evidence type="ECO:0000269" key="3">
    <source>
    </source>
</evidence>
<evidence type="ECO:0000269" key="4">
    <source>
    </source>
</evidence>
<evidence type="ECO:0000269" key="5">
    <source>
    </source>
</evidence>
<evidence type="ECO:0000303" key="6">
    <source>
    </source>
</evidence>
<evidence type="ECO:0000305" key="7"/>
<evidence type="ECO:0000305" key="8">
    <source>
    </source>
</evidence>
<evidence type="ECO:0000312" key="9">
    <source>
        <dbReference type="Araport" id="AT3G04070"/>
    </source>
</evidence>